<evidence type="ECO:0000250" key="1"/>
<evidence type="ECO:0000255" key="2">
    <source>
        <dbReference type="PROSITE-ProRule" id="PRU01055"/>
    </source>
</evidence>
<evidence type="ECO:0000256" key="3">
    <source>
        <dbReference type="SAM" id="MobiDB-lite"/>
    </source>
</evidence>
<evidence type="ECO:0000269" key="4">
    <source>
    </source>
</evidence>
<evidence type="ECO:0000305" key="5"/>
<keyword id="KW-0131">Cell cycle</keyword>
<keyword id="KW-0132">Cell division</keyword>
<keyword id="KW-0963">Cytoplasm</keyword>
<keyword id="KW-0206">Cytoskeleton</keyword>
<keyword id="KW-0342">GTP-binding</keyword>
<keyword id="KW-0378">Hydrolase</keyword>
<keyword id="KW-0493">Microtubule</keyword>
<keyword id="KW-0505">Motor protein</keyword>
<keyword id="KW-0547">Nucleotide-binding</keyword>
<keyword id="KW-1185">Reference proteome</keyword>
<dbReference type="EMBL" id="AC022520">
    <property type="protein sequence ID" value="AAF87857.1"/>
    <property type="status" value="ALT_SEQ"/>
    <property type="molecule type" value="Genomic_DNA"/>
</dbReference>
<dbReference type="EMBL" id="CP002684">
    <property type="protein sequence ID" value="AEE32895.1"/>
    <property type="molecule type" value="Genomic_DNA"/>
</dbReference>
<dbReference type="EMBL" id="BX842486">
    <property type="status" value="NOT_ANNOTATED_CDS"/>
    <property type="molecule type" value="mRNA"/>
</dbReference>
<dbReference type="PIR" id="A96572">
    <property type="entry name" value="A96572"/>
</dbReference>
<dbReference type="RefSeq" id="NP_175722.1">
    <property type="nucleotide sequence ID" value="NM_104193.5"/>
</dbReference>
<dbReference type="SMR" id="F4HPR5"/>
<dbReference type="FunCoup" id="F4HPR5">
    <property type="interactions" value="226"/>
</dbReference>
<dbReference type="STRING" id="3702.F4HPR5"/>
<dbReference type="iPTMnet" id="F4HPR5"/>
<dbReference type="PaxDb" id="3702-AT1G53140.1"/>
<dbReference type="ProteomicsDB" id="224370"/>
<dbReference type="EnsemblPlants" id="AT1G53140.1">
    <property type="protein sequence ID" value="AT1G53140.1"/>
    <property type="gene ID" value="AT1G53140"/>
</dbReference>
<dbReference type="GeneID" id="841748"/>
<dbReference type="Gramene" id="AT1G53140.1">
    <property type="protein sequence ID" value="AT1G53140.1"/>
    <property type="gene ID" value="AT1G53140"/>
</dbReference>
<dbReference type="KEGG" id="ath:AT1G53140"/>
<dbReference type="Araport" id="AT1G53140"/>
<dbReference type="TAIR" id="AT1G53140">
    <property type="gene designation" value="DRP5A"/>
</dbReference>
<dbReference type="eggNOG" id="KOG0446">
    <property type="taxonomic scope" value="Eukaryota"/>
</dbReference>
<dbReference type="HOGENOM" id="CLU_020194_0_0_1"/>
<dbReference type="InParanoid" id="F4HPR5"/>
<dbReference type="OMA" id="KQRTEAH"/>
<dbReference type="OrthoDB" id="5061070at2759"/>
<dbReference type="PRO" id="PR:F4HPR5"/>
<dbReference type="Proteomes" id="UP000006548">
    <property type="component" value="Chromosome 1"/>
</dbReference>
<dbReference type="ExpressionAtlas" id="F4HPR5">
    <property type="expression patterns" value="baseline and differential"/>
</dbReference>
<dbReference type="GO" id="GO:0009504">
    <property type="term" value="C:cell plate"/>
    <property type="evidence" value="ECO:0000314"/>
    <property type="project" value="UniProtKB"/>
</dbReference>
<dbReference type="GO" id="GO:0005874">
    <property type="term" value="C:microtubule"/>
    <property type="evidence" value="ECO:0007669"/>
    <property type="project" value="UniProtKB-KW"/>
</dbReference>
<dbReference type="GO" id="GO:0009524">
    <property type="term" value="C:phragmoplast"/>
    <property type="evidence" value="ECO:0007669"/>
    <property type="project" value="UniProtKB-SubCell"/>
</dbReference>
<dbReference type="GO" id="GO:0005525">
    <property type="term" value="F:GTP binding"/>
    <property type="evidence" value="ECO:0007669"/>
    <property type="project" value="UniProtKB-KW"/>
</dbReference>
<dbReference type="GO" id="GO:0003924">
    <property type="term" value="F:GTPase activity"/>
    <property type="evidence" value="ECO:0007669"/>
    <property type="project" value="InterPro"/>
</dbReference>
<dbReference type="GO" id="GO:0000911">
    <property type="term" value="P:cytokinesis by cell plate formation"/>
    <property type="evidence" value="ECO:0000315"/>
    <property type="project" value="TAIR"/>
</dbReference>
<dbReference type="CDD" id="cd08771">
    <property type="entry name" value="DLP_1"/>
    <property type="match status" value="1"/>
</dbReference>
<dbReference type="FunFam" id="3.40.50.300:FF:001030">
    <property type="entry name" value="Dynamin-related protein 5A"/>
    <property type="match status" value="1"/>
</dbReference>
<dbReference type="Gene3D" id="3.40.50.300">
    <property type="entry name" value="P-loop containing nucleotide triphosphate hydrolases"/>
    <property type="match status" value="1"/>
</dbReference>
<dbReference type="InterPro" id="IPR022812">
    <property type="entry name" value="Dynamin"/>
</dbReference>
<dbReference type="InterPro" id="IPR001401">
    <property type="entry name" value="Dynamin_GTPase"/>
</dbReference>
<dbReference type="InterPro" id="IPR045063">
    <property type="entry name" value="Dynamin_N"/>
</dbReference>
<dbReference type="InterPro" id="IPR030381">
    <property type="entry name" value="G_DYNAMIN_dom"/>
</dbReference>
<dbReference type="InterPro" id="IPR027417">
    <property type="entry name" value="P-loop_NTPase"/>
</dbReference>
<dbReference type="PANTHER" id="PTHR11566">
    <property type="entry name" value="DYNAMIN"/>
    <property type="match status" value="1"/>
</dbReference>
<dbReference type="PANTHER" id="PTHR11566:SF169">
    <property type="entry name" value="DYNAMIN-LIKE PROTEIN C"/>
    <property type="match status" value="1"/>
</dbReference>
<dbReference type="Pfam" id="PF00350">
    <property type="entry name" value="Dynamin_N"/>
    <property type="match status" value="1"/>
</dbReference>
<dbReference type="PRINTS" id="PR00195">
    <property type="entry name" value="DYNAMIN"/>
</dbReference>
<dbReference type="SMART" id="SM00053">
    <property type="entry name" value="DYNc"/>
    <property type="match status" value="1"/>
</dbReference>
<dbReference type="SUPFAM" id="SSF52540">
    <property type="entry name" value="P-loop containing nucleoside triphosphate hydrolases"/>
    <property type="match status" value="1"/>
</dbReference>
<dbReference type="PROSITE" id="PS51718">
    <property type="entry name" value="G_DYNAMIN_2"/>
    <property type="match status" value="1"/>
</dbReference>
<feature type="chain" id="PRO_0000415908" description="Dynamin-related protein 5A">
    <location>
        <begin position="1"/>
        <end position="817"/>
    </location>
</feature>
<feature type="domain" description="Dynamin-type G" evidence="2">
    <location>
        <begin position="59"/>
        <end position="346"/>
    </location>
</feature>
<feature type="region of interest" description="Disordered" evidence="3">
    <location>
        <begin position="1"/>
        <end position="37"/>
    </location>
</feature>
<feature type="region of interest" description="G1 motif" evidence="2">
    <location>
        <begin position="69"/>
        <end position="76"/>
    </location>
</feature>
<feature type="region of interest" description="G2 motif" evidence="2">
    <location>
        <begin position="95"/>
        <end position="97"/>
    </location>
</feature>
<feature type="region of interest" description="G3 motif" evidence="2">
    <location>
        <begin position="175"/>
        <end position="178"/>
    </location>
</feature>
<feature type="region of interest" description="G4 motif" evidence="2">
    <location>
        <begin position="244"/>
        <end position="247"/>
    </location>
</feature>
<feature type="region of interest" description="G5 motif" evidence="2">
    <location>
        <begin position="280"/>
        <end position="283"/>
    </location>
</feature>
<feature type="region of interest" description="Disordered" evidence="3">
    <location>
        <begin position="405"/>
        <end position="425"/>
    </location>
</feature>
<feature type="region of interest" description="Disordered" evidence="3">
    <location>
        <begin position="616"/>
        <end position="658"/>
    </location>
</feature>
<feature type="compositionally biased region" description="Polar residues" evidence="3">
    <location>
        <begin position="1"/>
        <end position="20"/>
    </location>
</feature>
<feature type="compositionally biased region" description="Basic and acidic residues" evidence="3">
    <location>
        <begin position="618"/>
        <end position="629"/>
    </location>
</feature>
<feature type="binding site" evidence="1">
    <location>
        <begin position="69"/>
        <end position="76"/>
    </location>
    <ligand>
        <name>GTP</name>
        <dbReference type="ChEBI" id="CHEBI:37565"/>
    </ligand>
</feature>
<feature type="binding site" evidence="1">
    <location>
        <begin position="175"/>
        <end position="179"/>
    </location>
    <ligand>
        <name>GTP</name>
        <dbReference type="ChEBI" id="CHEBI:37565"/>
    </ligand>
</feature>
<feature type="binding site" evidence="1">
    <location>
        <begin position="244"/>
        <end position="247"/>
    </location>
    <ligand>
        <name>GTP</name>
        <dbReference type="ChEBI" id="CHEBI:37565"/>
    </ligand>
</feature>
<accession>F4HPR5</accession>
<accession>Q9LNN8</accession>
<name>DRP5A_ARATH</name>
<reference key="1">
    <citation type="journal article" date="2000" name="Nature">
        <title>Sequence and analysis of chromosome 1 of the plant Arabidopsis thaliana.</title>
        <authorList>
            <person name="Theologis A."/>
            <person name="Ecker J.R."/>
            <person name="Palm C.J."/>
            <person name="Federspiel N.A."/>
            <person name="Kaul S."/>
            <person name="White O."/>
            <person name="Alonso J."/>
            <person name="Altafi H."/>
            <person name="Araujo R."/>
            <person name="Bowman C.L."/>
            <person name="Brooks S.Y."/>
            <person name="Buehler E."/>
            <person name="Chan A."/>
            <person name="Chao Q."/>
            <person name="Chen H."/>
            <person name="Cheuk R.F."/>
            <person name="Chin C.W."/>
            <person name="Chung M.K."/>
            <person name="Conn L."/>
            <person name="Conway A.B."/>
            <person name="Conway A.R."/>
            <person name="Creasy T.H."/>
            <person name="Dewar K."/>
            <person name="Dunn P."/>
            <person name="Etgu P."/>
            <person name="Feldblyum T.V."/>
            <person name="Feng J.-D."/>
            <person name="Fong B."/>
            <person name="Fujii C.Y."/>
            <person name="Gill J.E."/>
            <person name="Goldsmith A.D."/>
            <person name="Haas B."/>
            <person name="Hansen N.F."/>
            <person name="Hughes B."/>
            <person name="Huizar L."/>
            <person name="Hunter J.L."/>
            <person name="Jenkins J."/>
            <person name="Johnson-Hopson C."/>
            <person name="Khan S."/>
            <person name="Khaykin E."/>
            <person name="Kim C.J."/>
            <person name="Koo H.L."/>
            <person name="Kremenetskaia I."/>
            <person name="Kurtz D.B."/>
            <person name="Kwan A."/>
            <person name="Lam B."/>
            <person name="Langin-Hooper S."/>
            <person name="Lee A."/>
            <person name="Lee J.M."/>
            <person name="Lenz C.A."/>
            <person name="Li J.H."/>
            <person name="Li Y.-P."/>
            <person name="Lin X."/>
            <person name="Liu S.X."/>
            <person name="Liu Z.A."/>
            <person name="Luros J.S."/>
            <person name="Maiti R."/>
            <person name="Marziali A."/>
            <person name="Militscher J."/>
            <person name="Miranda M."/>
            <person name="Nguyen M."/>
            <person name="Nierman W.C."/>
            <person name="Osborne B.I."/>
            <person name="Pai G."/>
            <person name="Peterson J."/>
            <person name="Pham P.K."/>
            <person name="Rizzo M."/>
            <person name="Rooney T."/>
            <person name="Rowley D."/>
            <person name="Sakano H."/>
            <person name="Salzberg S.L."/>
            <person name="Schwartz J.R."/>
            <person name="Shinn P."/>
            <person name="Southwick A.M."/>
            <person name="Sun H."/>
            <person name="Tallon L.J."/>
            <person name="Tambunga G."/>
            <person name="Toriumi M.J."/>
            <person name="Town C.D."/>
            <person name="Utterback T."/>
            <person name="Van Aken S."/>
            <person name="Vaysberg M."/>
            <person name="Vysotskaia V.S."/>
            <person name="Walker M."/>
            <person name="Wu D."/>
            <person name="Yu G."/>
            <person name="Fraser C.M."/>
            <person name="Venter J.C."/>
            <person name="Davis R.W."/>
        </authorList>
    </citation>
    <scope>NUCLEOTIDE SEQUENCE [LARGE SCALE GENOMIC DNA]</scope>
    <source>
        <strain>cv. Columbia</strain>
    </source>
</reference>
<reference key="2">
    <citation type="journal article" date="2017" name="Plant J.">
        <title>Araport11: a complete reannotation of the Arabidopsis thaliana reference genome.</title>
        <authorList>
            <person name="Cheng C.Y."/>
            <person name="Krishnakumar V."/>
            <person name="Chan A.P."/>
            <person name="Thibaud-Nissen F."/>
            <person name="Schobel S."/>
            <person name="Town C.D."/>
        </authorList>
    </citation>
    <scope>GENOME REANNOTATION</scope>
    <source>
        <strain>cv. Columbia</strain>
    </source>
</reference>
<reference key="3">
    <citation type="journal article" date="2004" name="Genome Res.">
        <title>Whole genome sequence comparisons and 'full-length' cDNA sequences: a combined approach to evaluate and improve Arabidopsis genome annotation.</title>
        <authorList>
            <person name="Castelli V."/>
            <person name="Aury J.-M."/>
            <person name="Jaillon O."/>
            <person name="Wincker P."/>
            <person name="Clepet C."/>
            <person name="Menard M."/>
            <person name="Cruaud C."/>
            <person name="Quetier F."/>
            <person name="Scarpelli C."/>
            <person name="Schaechter V."/>
            <person name="Temple G."/>
            <person name="Caboche M."/>
            <person name="Weissenbach J."/>
            <person name="Salanoubat M."/>
        </authorList>
    </citation>
    <scope>NUCLEOTIDE SEQUENCE [LARGE SCALE MRNA]</scope>
    <source>
        <strain>cv. Columbia</strain>
    </source>
</reference>
<reference key="4">
    <citation type="journal article" date="2003" name="Plant Mol. Biol.">
        <title>A unified nomenclature for Arabidopsis dynamin-related large GTPases based on homology and possible functions.</title>
        <authorList>
            <person name="Hong Z."/>
            <person name="Bednarek S.Y."/>
            <person name="Blumwald E."/>
            <person name="Hwang I."/>
            <person name="Jurgens G."/>
            <person name="Menzel D."/>
            <person name="Osteryoung K.W."/>
            <person name="Raikhel N.V."/>
            <person name="Shinozaki K."/>
            <person name="Tsutsumi N."/>
            <person name="Verma D.P.S."/>
        </authorList>
    </citation>
    <scope>GENE FAMILY</scope>
    <scope>NOMENCLATURE</scope>
</reference>
<reference key="5">
    <citation type="journal article" date="2008" name="Proc. Natl. Acad. Sci. U.S.A.">
        <title>Evolutionary linkage between eukaryotic cytokinesis and chloroplast division by dynamin proteins.</title>
        <authorList>
            <person name="Miyagishima S.Y."/>
            <person name="Kuwayama H."/>
            <person name="Urushihara H."/>
            <person name="Nakanishi H."/>
        </authorList>
    </citation>
    <scope>FUNCTION</scope>
    <scope>SUBCELLULAR LOCATION</scope>
    <scope>TISSUE SPECIFICITY</scope>
    <scope>INDUCTION</scope>
    <scope>DISRUPTION PHENOTYPE</scope>
</reference>
<proteinExistence type="evidence at transcript level"/>
<organism>
    <name type="scientific">Arabidopsis thaliana</name>
    <name type="common">Mouse-ear cress</name>
    <dbReference type="NCBI Taxonomy" id="3702"/>
    <lineage>
        <taxon>Eukaryota</taxon>
        <taxon>Viridiplantae</taxon>
        <taxon>Streptophyta</taxon>
        <taxon>Embryophyta</taxon>
        <taxon>Tracheophyta</taxon>
        <taxon>Spermatophyta</taxon>
        <taxon>Magnoliopsida</taxon>
        <taxon>eudicotyledons</taxon>
        <taxon>Gunneridae</taxon>
        <taxon>Pentapetalae</taxon>
        <taxon>rosids</taxon>
        <taxon>malvids</taxon>
        <taxon>Brassicales</taxon>
        <taxon>Brassicaceae</taxon>
        <taxon>Camelineae</taxon>
        <taxon>Arabidopsis</taxon>
    </lineage>
</organism>
<gene>
    <name type="primary">DRP5A</name>
    <name type="ordered locus">At1g53140</name>
    <name type="ORF">F8L10.1</name>
</gene>
<protein>
    <recommendedName>
        <fullName>Dynamin-related protein 5A</fullName>
    </recommendedName>
    <alternativeName>
        <fullName>Protein ARC5-like</fullName>
    </alternativeName>
</protein>
<sequence length="817" mass="90616">MANSNTYLTTPTKTPSSRRNQQSQSKMQSHSKDPINAESRSRFEAYNRLQAAAVAFGEKLPIPEIVAIGGQSDGKSSLLEALLGFRFNVREVEMGTRRPLILQMVHDLSALEPRCRFQDEDSEEYGSPIVSATAVADVIRSRTEALLKKTKTAVSPKPIVMRAEYAHCPNLTIIDTPGFVLKAKKGEPETTPDEILSMVKSLASPPHRILLFLQQSSVEWCSSLWLDAVREIDSSFRRTIVVVSKFDNRLKEFSDRGEVDRYLSASGYLGENTRPYFVALPKDRSTISNDEFRRQISQVDTEVIRHLREGVKGGFDEEKFRSCIGFGSLRDFLESELQKRYKEAAPATLALLEERCSEVTDDMLRMDMKIQATSDVAHLRKAAMLYTASISNHVGALIDGAANPAPEQWGKTTEEERGESGIGSWPGVSVDIKPPNAVLKLYGGAAFERVIHEFRCAAYSIECPPVSREKVANILLAHAGRGGGRGVTEASAEIARTAARSWLAPLLDTACDRLAFVLGSLFEIALERNLNQNSEYEKKTENMDGYVGFHAAVRNCYSRFVKNLAKQCKQLVRHHLDSVTSPYSMACYENNYHQGGAFGAYNKFNQASPNSFCFELSDTSRDEPMKDQENIPPEKNNGQETTPGKGGESHITVPETPSPDQPCEIVYGLVKKEIGNGPDGVGARKRMARMVGNRNIEPFRVQNGGLMFANADNGMKSSSAYSEICSSAAQHFARIREVLVERSVTSTLNSGFLTPCRDRLVVALGLDLFAVNDDKFMDMFVAPGAIVVLQNERQQLQKRQKILQSCLTEFKTVARSL</sequence>
<comment type="function">
    <text evidence="4">Probable microtubule-associated force-producing protein that is targeted to the forming cell plate during cytokinesis. May play a role in cell division.</text>
</comment>
<comment type="subcellular location">
    <subcellularLocation>
        <location evidence="4">Cytoplasm</location>
    </subcellularLocation>
    <subcellularLocation>
        <location evidence="4">Cytoplasm</location>
        <location evidence="4">Cytoskeleton</location>
    </subcellularLocation>
    <subcellularLocation>
        <location evidence="4">Cytoplasm</location>
        <location evidence="4">Cytoskeleton</location>
        <location evidence="4">Phragmoplast</location>
    </subcellularLocation>
    <text>Localizes in the forming cell plate during cytokinesis.</text>
</comment>
<comment type="tissue specificity">
    <text evidence="4">Expressed in root and leaf meristems.</text>
</comment>
<comment type="induction">
    <text evidence="4">Expression is cell-cycle regulated. Expressed during mitosis from the prophase to the telophase.</text>
</comment>
<comment type="disruption phenotype">
    <text evidence="4">No visible phenotype under normal growth conditions, but when grown at 16 degrees Celsius, seedlings grow slowly and root tip cells form incomplete or twisted cell plates.</text>
</comment>
<comment type="similarity">
    <text evidence="2">Belongs to the TRAFAC class dynamin-like GTPase superfamily. Dynamin/Fzo/YdjA family.</text>
</comment>
<comment type="sequence caution" evidence="5">
    <conflict type="erroneous gene model prediction">
        <sequence resource="EMBL-CDS" id="AAF87857"/>
    </conflict>
</comment>
<comment type="sequence caution" evidence="5">
    <conflict type="miscellaneous discrepancy">
        <sequence resource="EMBL" id="BX842486"/>
    </conflict>
    <text>Sequencing errors.</text>
</comment>